<gene>
    <name type="primary">lysA</name>
</gene>
<sequence length="141" mass="15497">MKKLSLSLMLNVSLALMLALSLIYPQSVAVNFVAAWAILATVICVVAGGVGVYATEYVLERYGRELPPESLAVKIVTSLFLQPVPWRRRAAALVVVVATFISLVAAGWIFTALIYLVVSLFFRLIRKACRQRLEGREPCQG</sequence>
<name>ANTIH_BPP2</name>
<organismHost>
    <name type="scientific">Enterobacteriaceae</name>
    <dbReference type="NCBI Taxonomy" id="543"/>
</organismHost>
<dbReference type="EMBL" id="AF063097">
    <property type="protein sequence ID" value="AAD03277.1"/>
    <property type="molecule type" value="Genomic_DNA"/>
</dbReference>
<dbReference type="PIR" id="E55855">
    <property type="entry name" value="E55855"/>
</dbReference>
<dbReference type="RefSeq" id="NP_046766.1">
    <property type="nucleotide sequence ID" value="NC_001895.1"/>
</dbReference>
<dbReference type="SMR" id="P51769"/>
<dbReference type="GeneID" id="77440797"/>
<dbReference type="KEGG" id="vg:77440797"/>
<dbReference type="Proteomes" id="UP000009092">
    <property type="component" value="Genome"/>
</dbReference>
<dbReference type="GO" id="GO:0020002">
    <property type="term" value="C:host cell plasma membrane"/>
    <property type="evidence" value="ECO:0007669"/>
    <property type="project" value="UniProtKB-SubCell"/>
</dbReference>
<dbReference type="GO" id="GO:0016020">
    <property type="term" value="C:membrane"/>
    <property type="evidence" value="ECO:0007669"/>
    <property type="project" value="UniProtKB-KW"/>
</dbReference>
<dbReference type="GO" id="GO:0031640">
    <property type="term" value="P:killing of cells of another organism"/>
    <property type="evidence" value="ECO:0007669"/>
    <property type="project" value="UniProtKB-KW"/>
</dbReference>
<dbReference type="InterPro" id="IPR047759">
    <property type="entry name" value="LysA-like"/>
</dbReference>
<dbReference type="NCBIfam" id="NF038378">
    <property type="entry name" value="DNZ54_00345_fm"/>
    <property type="match status" value="1"/>
</dbReference>
<evidence type="ECO:0000250" key="1"/>
<evidence type="ECO:0000255" key="2"/>
<evidence type="ECO:0000269" key="3">
    <source>
    </source>
</evidence>
<evidence type="ECO:0000305" key="4"/>
<proteinExistence type="inferred from homology"/>
<keyword id="KW-0204">Cytolysis</keyword>
<keyword id="KW-1030">Host cell inner membrane</keyword>
<keyword id="KW-0578">Host cell lysis by virus</keyword>
<keyword id="KW-1032">Host cell membrane</keyword>
<keyword id="KW-1043">Host membrane</keyword>
<keyword id="KW-0472">Membrane</keyword>
<keyword id="KW-1185">Reference proteome</keyword>
<keyword id="KW-0812">Transmembrane</keyword>
<keyword id="KW-1133">Transmembrane helix</keyword>
<keyword id="KW-1188">Viral release from host cell</keyword>
<accession>P51769</accession>
<organism>
    <name type="scientific">Escherichia phage P2</name>
    <name type="common">Bacteriophage P2</name>
    <dbReference type="NCBI Taxonomy" id="2905681"/>
    <lineage>
        <taxon>Viruses</taxon>
        <taxon>Duplodnaviria</taxon>
        <taxon>Heunggongvirae</taxon>
        <taxon>Uroviricota</taxon>
        <taxon>Caudoviricetes</taxon>
        <taxon>Peduoviridae</taxon>
        <taxon>Peduovirus</taxon>
        <taxon>Peduovirus P2</taxon>
    </lineage>
</organism>
<reference key="1">
    <citation type="journal article" date="1994" name="J. Bacteriol.">
        <title>Functions involved in bacteriophage P2-induced host cell lysis and identification of a new tail gene.</title>
        <authorList>
            <person name="Ziermann R."/>
            <person name="Bartlett B."/>
            <person name="Calendar R."/>
            <person name="Christie G.E."/>
        </authorList>
    </citation>
    <scope>NUCLEOTIDE SEQUENCE [GENOMIC DNA]</scope>
</reference>
<reference key="2">
    <citation type="journal article" date="2013" name="J. Bacteriol.">
        <title>Functional analysis of a class I holin, P2 Y.</title>
        <authorList>
            <person name="To K.H."/>
            <person name="Dewey J."/>
            <person name="Weaver J."/>
            <person name="Park T."/>
            <person name="Young R."/>
        </authorList>
    </citation>
    <scope>FUNCTION</scope>
</reference>
<comment type="function">
    <text evidence="3">Involved in lysis inhibition. Interacts with and inhibits the holin thereby delaying the host cell lysis timing.</text>
</comment>
<comment type="subunit">
    <text evidence="1">Interacts with holin; this interaction this interaction blocks the holin homomultimerization and delays the host cell lysis.</text>
</comment>
<comment type="subcellular location">
    <subcellularLocation>
        <location evidence="4">Host cell inner membrane</location>
        <topology evidence="4">Multi-pass membrane protein</topology>
    </subcellularLocation>
</comment>
<feature type="chain" id="PRO_0000165242" description="Putative antiholin">
    <location>
        <begin position="1"/>
        <end position="141"/>
    </location>
</feature>
<feature type="transmembrane region" description="Helical" evidence="2">
    <location>
        <begin position="4"/>
        <end position="24"/>
    </location>
</feature>
<feature type="transmembrane region" description="Helical" evidence="2">
    <location>
        <begin position="32"/>
        <end position="52"/>
    </location>
</feature>
<feature type="transmembrane region" description="Helical" evidence="2">
    <location>
        <begin position="94"/>
        <end position="114"/>
    </location>
</feature>
<protein>
    <recommendedName>
        <fullName>Putative antiholin</fullName>
    </recommendedName>
    <alternativeName>
        <fullName>Protein lysA</fullName>
    </alternativeName>
</protein>